<name>U499_ASPCL</name>
<feature type="signal peptide" evidence="1">
    <location>
        <begin position="1"/>
        <end position="18"/>
    </location>
</feature>
<feature type="chain" id="PRO_0000307900" description="UPF0499 protein ACLA_083080">
    <location>
        <begin position="19"/>
        <end position="71"/>
    </location>
</feature>
<feature type="disulfide bond" evidence="2">
    <location>
        <begin position="44"/>
        <end position="58"/>
    </location>
</feature>
<feature type="disulfide bond" evidence="2">
    <location>
        <begin position="48"/>
        <end position="61"/>
    </location>
</feature>
<feature type="disulfide bond" evidence="2">
    <location>
        <begin position="54"/>
        <end position="68"/>
    </location>
</feature>
<protein>
    <recommendedName>
        <fullName>UPF0499 protein ACLA_083080</fullName>
    </recommendedName>
</protein>
<reference key="1">
    <citation type="journal article" date="2008" name="PLoS Genet.">
        <title>Genomic islands in the pathogenic filamentous fungus Aspergillus fumigatus.</title>
        <authorList>
            <person name="Fedorova N.D."/>
            <person name="Khaldi N."/>
            <person name="Joardar V.S."/>
            <person name="Maiti R."/>
            <person name="Amedeo P."/>
            <person name="Anderson M.J."/>
            <person name="Crabtree J."/>
            <person name="Silva J.C."/>
            <person name="Badger J.H."/>
            <person name="Albarraq A."/>
            <person name="Angiuoli S."/>
            <person name="Bussey H."/>
            <person name="Bowyer P."/>
            <person name="Cotty P.J."/>
            <person name="Dyer P.S."/>
            <person name="Egan A."/>
            <person name="Galens K."/>
            <person name="Fraser-Liggett C.M."/>
            <person name="Haas B.J."/>
            <person name="Inman J.M."/>
            <person name="Kent R."/>
            <person name="Lemieux S."/>
            <person name="Malavazi I."/>
            <person name="Orvis J."/>
            <person name="Roemer T."/>
            <person name="Ronning C.M."/>
            <person name="Sundaram J.P."/>
            <person name="Sutton G."/>
            <person name="Turner G."/>
            <person name="Venter J.C."/>
            <person name="White O.R."/>
            <person name="Whitty B.R."/>
            <person name="Youngman P."/>
            <person name="Wolfe K.H."/>
            <person name="Goldman G.H."/>
            <person name="Wortman J.R."/>
            <person name="Jiang B."/>
            <person name="Denning D.W."/>
            <person name="Nierman W.C."/>
        </authorList>
    </citation>
    <scope>NUCLEOTIDE SEQUENCE [LARGE SCALE GENOMIC DNA]</scope>
    <source>
        <strain>ATCC 1007 / CBS 513.65 / DSM 816 / NCTC 3887 / NRRL 1 / QM 1276 / 107</strain>
    </source>
</reference>
<comment type="subcellular location">
    <subcellularLocation>
        <location evidence="2">Secreted</location>
    </subcellularLocation>
</comment>
<comment type="domain">
    <text evidence="2">The presence of a 'disulfide through disulfide knot' structurally defines this protein as a knottin.</text>
</comment>
<comment type="similarity">
    <text evidence="2">Belongs to the UPF0499 family.</text>
</comment>
<proteinExistence type="inferred from homology"/>
<accession>A1CTH7</accession>
<keyword id="KW-1015">Disulfide bond</keyword>
<keyword id="KW-0960">Knottin</keyword>
<keyword id="KW-1185">Reference proteome</keyword>
<keyword id="KW-0964">Secreted</keyword>
<keyword id="KW-0732">Signal</keyword>
<evidence type="ECO:0000255" key="1"/>
<evidence type="ECO:0000305" key="2"/>
<organism>
    <name type="scientific">Aspergillus clavatus (strain ATCC 1007 / CBS 513.65 / DSM 816 / NCTC 3887 / NRRL 1 / QM 1276 / 107)</name>
    <dbReference type="NCBI Taxonomy" id="344612"/>
    <lineage>
        <taxon>Eukaryota</taxon>
        <taxon>Fungi</taxon>
        <taxon>Dikarya</taxon>
        <taxon>Ascomycota</taxon>
        <taxon>Pezizomycotina</taxon>
        <taxon>Eurotiomycetes</taxon>
        <taxon>Eurotiomycetidae</taxon>
        <taxon>Eurotiales</taxon>
        <taxon>Aspergillaceae</taxon>
        <taxon>Aspergillus</taxon>
        <taxon>Aspergillus subgen. Fumigati</taxon>
    </lineage>
</organism>
<dbReference type="EMBL" id="DS027060">
    <property type="protein sequence ID" value="EAW06614.1"/>
    <property type="molecule type" value="Genomic_DNA"/>
</dbReference>
<dbReference type="RefSeq" id="XP_001268040.1">
    <property type="nucleotide sequence ID" value="XM_001268039.1"/>
</dbReference>
<dbReference type="EnsemblFungi" id="EAW06614">
    <property type="protein sequence ID" value="EAW06614"/>
    <property type="gene ID" value="ACLA_083080"/>
</dbReference>
<dbReference type="GeneID" id="4699769"/>
<dbReference type="KEGG" id="act:ACLA_083080"/>
<dbReference type="VEuPathDB" id="FungiDB:ACLA_083080"/>
<dbReference type="eggNOG" id="ENOG502RPNC">
    <property type="taxonomic scope" value="Eukaryota"/>
</dbReference>
<dbReference type="HOGENOM" id="CLU_2739561_0_0_1"/>
<dbReference type="OMA" id="DDKRDHC"/>
<dbReference type="OrthoDB" id="4489613at2759"/>
<dbReference type="Proteomes" id="UP000006701">
    <property type="component" value="Unassembled WGS sequence"/>
</dbReference>
<dbReference type="GO" id="GO:0005576">
    <property type="term" value="C:extracellular region"/>
    <property type="evidence" value="ECO:0007669"/>
    <property type="project" value="UniProtKB-SubCell"/>
</dbReference>
<gene>
    <name type="ORF">ACLA_083080</name>
</gene>
<sequence>MKFLNILTLAFITGMASAAAVPGGTTTNDAASTLDNLNNKRSVCGQLCFNNKDCGGPCPKCNTKEGVCVKK</sequence>